<protein>
    <recommendedName>
        <fullName evidence="1">tRNA pseudouridine synthase A</fullName>
        <ecNumber evidence="1">5.4.99.12</ecNumber>
    </recommendedName>
    <alternativeName>
        <fullName evidence="1">tRNA pseudouridine(38-40) synthase</fullName>
    </alternativeName>
    <alternativeName>
        <fullName evidence="1">tRNA pseudouridylate synthase I</fullName>
    </alternativeName>
    <alternativeName>
        <fullName evidence="1">tRNA-uridine isomerase I</fullName>
    </alternativeName>
</protein>
<keyword id="KW-0413">Isomerase</keyword>
<keyword id="KW-1185">Reference proteome</keyword>
<keyword id="KW-0819">tRNA processing</keyword>
<feature type="chain" id="PRO_0000057488" description="tRNA pseudouridine synthase A">
    <location>
        <begin position="1"/>
        <end position="264"/>
    </location>
</feature>
<feature type="active site" description="Nucleophile" evidence="1">
    <location>
        <position position="52"/>
    </location>
</feature>
<feature type="binding site" evidence="1">
    <location>
        <position position="110"/>
    </location>
    <ligand>
        <name>substrate</name>
    </ligand>
</feature>
<reference key="1">
    <citation type="journal article" date="2002" name="Nat. Genet.">
        <title>Genome sequence of the endocellular obligate symbiont of tsetse flies, Wigglesworthia glossinidia.</title>
        <authorList>
            <person name="Akman L."/>
            <person name="Yamashita A."/>
            <person name="Watanabe H."/>
            <person name="Oshima K."/>
            <person name="Shiba T."/>
            <person name="Hattori M."/>
            <person name="Aksoy S."/>
        </authorList>
    </citation>
    <scope>NUCLEOTIDE SEQUENCE [LARGE SCALE GENOMIC DNA]</scope>
</reference>
<organism>
    <name type="scientific">Wigglesworthia glossinidia brevipalpis</name>
    <dbReference type="NCBI Taxonomy" id="36870"/>
    <lineage>
        <taxon>Bacteria</taxon>
        <taxon>Pseudomonadati</taxon>
        <taxon>Pseudomonadota</taxon>
        <taxon>Gammaproteobacteria</taxon>
        <taxon>Enterobacterales</taxon>
        <taxon>Erwiniaceae</taxon>
        <taxon>Wigglesworthia</taxon>
    </lineage>
</organism>
<dbReference type="EC" id="5.4.99.12" evidence="1"/>
<dbReference type="EMBL" id="BA000021">
    <property type="protein sequence ID" value="BAC24455.1"/>
    <property type="molecule type" value="Genomic_DNA"/>
</dbReference>
<dbReference type="SMR" id="Q8D2P5"/>
<dbReference type="STRING" id="36870.gene:10368805"/>
<dbReference type="KEGG" id="wbr:truA"/>
<dbReference type="eggNOG" id="COG0101">
    <property type="taxonomic scope" value="Bacteria"/>
</dbReference>
<dbReference type="HOGENOM" id="CLU_014673_0_2_6"/>
<dbReference type="OrthoDB" id="9811823at2"/>
<dbReference type="Proteomes" id="UP000000562">
    <property type="component" value="Chromosome"/>
</dbReference>
<dbReference type="GO" id="GO:0003723">
    <property type="term" value="F:RNA binding"/>
    <property type="evidence" value="ECO:0007669"/>
    <property type="project" value="InterPro"/>
</dbReference>
<dbReference type="GO" id="GO:0160147">
    <property type="term" value="F:tRNA pseudouridine(38-40) synthase activity"/>
    <property type="evidence" value="ECO:0007669"/>
    <property type="project" value="UniProtKB-EC"/>
</dbReference>
<dbReference type="GO" id="GO:0031119">
    <property type="term" value="P:tRNA pseudouridine synthesis"/>
    <property type="evidence" value="ECO:0007669"/>
    <property type="project" value="UniProtKB-UniRule"/>
</dbReference>
<dbReference type="CDD" id="cd02570">
    <property type="entry name" value="PseudoU_synth_EcTruA"/>
    <property type="match status" value="1"/>
</dbReference>
<dbReference type="FunFam" id="3.30.70.580:FF:000001">
    <property type="entry name" value="tRNA pseudouridine synthase A"/>
    <property type="match status" value="1"/>
</dbReference>
<dbReference type="Gene3D" id="3.30.70.660">
    <property type="entry name" value="Pseudouridine synthase I, catalytic domain, C-terminal subdomain"/>
    <property type="match status" value="1"/>
</dbReference>
<dbReference type="Gene3D" id="3.30.70.580">
    <property type="entry name" value="Pseudouridine synthase I, catalytic domain, N-terminal subdomain"/>
    <property type="match status" value="1"/>
</dbReference>
<dbReference type="HAMAP" id="MF_00171">
    <property type="entry name" value="TruA"/>
    <property type="match status" value="1"/>
</dbReference>
<dbReference type="InterPro" id="IPR020103">
    <property type="entry name" value="PsdUridine_synth_cat_dom_sf"/>
</dbReference>
<dbReference type="InterPro" id="IPR001406">
    <property type="entry name" value="PsdUridine_synth_TruA"/>
</dbReference>
<dbReference type="InterPro" id="IPR020097">
    <property type="entry name" value="PsdUridine_synth_TruA_a/b_dom"/>
</dbReference>
<dbReference type="InterPro" id="IPR020095">
    <property type="entry name" value="PsdUridine_synth_TruA_C"/>
</dbReference>
<dbReference type="InterPro" id="IPR020094">
    <property type="entry name" value="TruA/RsuA/RluB/E/F_N"/>
</dbReference>
<dbReference type="NCBIfam" id="TIGR00071">
    <property type="entry name" value="hisT_truA"/>
    <property type="match status" value="1"/>
</dbReference>
<dbReference type="PANTHER" id="PTHR11142">
    <property type="entry name" value="PSEUDOURIDYLATE SYNTHASE"/>
    <property type="match status" value="1"/>
</dbReference>
<dbReference type="PANTHER" id="PTHR11142:SF0">
    <property type="entry name" value="TRNA PSEUDOURIDINE SYNTHASE-LIKE 1"/>
    <property type="match status" value="1"/>
</dbReference>
<dbReference type="Pfam" id="PF01416">
    <property type="entry name" value="PseudoU_synth_1"/>
    <property type="match status" value="2"/>
</dbReference>
<dbReference type="PIRSF" id="PIRSF001430">
    <property type="entry name" value="tRNA_psdUrid_synth"/>
    <property type="match status" value="1"/>
</dbReference>
<dbReference type="SUPFAM" id="SSF55120">
    <property type="entry name" value="Pseudouridine synthase"/>
    <property type="match status" value="1"/>
</dbReference>
<accession>Q8D2P5</accession>
<evidence type="ECO:0000255" key="1">
    <source>
        <dbReference type="HAMAP-Rule" id="MF_00171"/>
    </source>
</evidence>
<sequence length="264" mass="31224">MKKLAAGISYQGNNYCGWQSQKNIISIQEYVELALFKFSGEKIKIYCAGRTDAKVHALLQVVHFYTDIKRSYRQWILGVNSYLPYDISIMWVIKVHNNFHARYSAIAKKYLYLIHNNISRSGIFRKYCFNVFISLNINDMKKAAQKLIGKHDFSSFKGSECQSKTTYRVIYYIRINKYKEYIFVEIKANSFLNHMMRNIIGNLIEIGKGKKSKEWMSELLFLKNNKFSIFSADPKGLYLSNVYYPFYFNIPKFNFKLKNFLKIF</sequence>
<proteinExistence type="inferred from homology"/>
<gene>
    <name evidence="1" type="primary">truA</name>
    <name type="ordered locus">WIGBR3090</name>
</gene>
<name>TRUA_WIGBR</name>
<comment type="function">
    <text evidence="1">Formation of pseudouridine at positions 38, 39 and 40 in the anticodon stem and loop of transfer RNAs.</text>
</comment>
<comment type="catalytic activity">
    <reaction evidence="1">
        <text>uridine(38/39/40) in tRNA = pseudouridine(38/39/40) in tRNA</text>
        <dbReference type="Rhea" id="RHEA:22376"/>
        <dbReference type="Rhea" id="RHEA-COMP:10085"/>
        <dbReference type="Rhea" id="RHEA-COMP:10087"/>
        <dbReference type="ChEBI" id="CHEBI:65314"/>
        <dbReference type="ChEBI" id="CHEBI:65315"/>
        <dbReference type="EC" id="5.4.99.12"/>
    </reaction>
</comment>
<comment type="subunit">
    <text evidence="1">Homodimer.</text>
</comment>
<comment type="similarity">
    <text evidence="1">Belongs to the tRNA pseudouridine synthase TruA family.</text>
</comment>